<protein>
    <recommendedName>
        <fullName>Hippocalcin-like protein 1</fullName>
    </recommendedName>
</protein>
<evidence type="ECO:0000250" key="1"/>
<evidence type="ECO:0000250" key="2">
    <source>
        <dbReference type="UniProtKB" id="P37235"/>
    </source>
</evidence>
<evidence type="ECO:0000255" key="3">
    <source>
        <dbReference type="PROSITE-ProRule" id="PRU00448"/>
    </source>
</evidence>
<evidence type="ECO:0000305" key="4"/>
<name>HPCL1_PIG</name>
<organism>
    <name type="scientific">Sus scrofa</name>
    <name type="common">Pig</name>
    <dbReference type="NCBI Taxonomy" id="9823"/>
    <lineage>
        <taxon>Eukaryota</taxon>
        <taxon>Metazoa</taxon>
        <taxon>Chordata</taxon>
        <taxon>Craniata</taxon>
        <taxon>Vertebrata</taxon>
        <taxon>Euteleostomi</taxon>
        <taxon>Mammalia</taxon>
        <taxon>Eutheria</taxon>
        <taxon>Laurasiatheria</taxon>
        <taxon>Artiodactyla</taxon>
        <taxon>Suina</taxon>
        <taxon>Suidae</taxon>
        <taxon>Sus</taxon>
    </lineage>
</organism>
<dbReference type="EMBL" id="DQ917645">
    <property type="protein sequence ID" value="ABI97190.1"/>
    <property type="molecule type" value="mRNA"/>
</dbReference>
<dbReference type="RefSeq" id="NP_001116598.1">
    <property type="nucleotide sequence ID" value="NM_001123126.1"/>
</dbReference>
<dbReference type="RefSeq" id="XP_020941208.1">
    <property type="nucleotide sequence ID" value="XM_021085549.1"/>
</dbReference>
<dbReference type="RefSeq" id="XP_020941209.1">
    <property type="nucleotide sequence ID" value="XM_021085550.1"/>
</dbReference>
<dbReference type="SMR" id="Q06AT0"/>
<dbReference type="FunCoup" id="Q06AT0">
    <property type="interactions" value="861"/>
</dbReference>
<dbReference type="STRING" id="9823.ENSSSCP00000029115"/>
<dbReference type="PeptideAtlas" id="Q06AT0"/>
<dbReference type="Ensembl" id="ENSSSCT00015085043.1">
    <property type="protein sequence ID" value="ENSSSCP00015034548.1"/>
    <property type="gene ID" value="ENSSSCG00015063367.1"/>
</dbReference>
<dbReference type="Ensembl" id="ENSSSCT00035057433.1">
    <property type="protein sequence ID" value="ENSSSCP00035023076.1"/>
    <property type="gene ID" value="ENSSSCG00035043226.1"/>
</dbReference>
<dbReference type="Ensembl" id="ENSSSCT00045043655.1">
    <property type="protein sequence ID" value="ENSSSCP00045030329.1"/>
    <property type="gene ID" value="ENSSSCG00045025606.1"/>
</dbReference>
<dbReference type="Ensembl" id="ENSSSCT00050033245.1">
    <property type="protein sequence ID" value="ENSSSCP00050013837.1"/>
    <property type="gene ID" value="ENSSSCG00050024692.1"/>
</dbReference>
<dbReference type="Ensembl" id="ENSSSCT00065072942.1">
    <property type="protein sequence ID" value="ENSSSCP00065031782.1"/>
    <property type="gene ID" value="ENSSSCG00065053258.1"/>
</dbReference>
<dbReference type="Ensembl" id="ENSSSCT00070032086.1">
    <property type="protein sequence ID" value="ENSSSCP00070026760.1"/>
    <property type="gene ID" value="ENSSSCG00070016312.1"/>
</dbReference>
<dbReference type="Ensembl" id="ENSSSCT00085047796">
    <property type="protein sequence ID" value="ENSSSCP00085033375"/>
    <property type="gene ID" value="ENSSSCG00085024927"/>
</dbReference>
<dbReference type="Ensembl" id="ENSSSCT00090047158">
    <property type="protein sequence ID" value="ENSSSCP00090029236"/>
    <property type="gene ID" value="ENSSSCG00090026692"/>
</dbReference>
<dbReference type="Ensembl" id="ENSSSCT00105011447">
    <property type="protein sequence ID" value="ENSSSCP00105008419"/>
    <property type="gene ID" value="ENSSSCG00105005666"/>
</dbReference>
<dbReference type="Ensembl" id="ENSSSCT00110002133">
    <property type="protein sequence ID" value="ENSSSCP00110001620"/>
    <property type="gene ID" value="ENSSSCG00110001091"/>
</dbReference>
<dbReference type="Ensembl" id="ENSSSCT00115010031">
    <property type="protein sequence ID" value="ENSSSCP00115009442"/>
    <property type="gene ID" value="ENSSSCG00115005792"/>
</dbReference>
<dbReference type="Ensembl" id="ENSSSCT00130004428">
    <property type="protein sequence ID" value="ENSSSCP00130003171"/>
    <property type="gene ID" value="ENSSSCG00130002265"/>
</dbReference>
<dbReference type="GeneID" id="100144506"/>
<dbReference type="KEGG" id="ssc:100144506"/>
<dbReference type="CTD" id="3241"/>
<dbReference type="InParanoid" id="Q06AT0"/>
<dbReference type="OMA" id="RQHTEFN"/>
<dbReference type="OrthoDB" id="191686at2759"/>
<dbReference type="Proteomes" id="UP000008227">
    <property type="component" value="Unplaced"/>
</dbReference>
<dbReference type="Proteomes" id="UP000314985">
    <property type="component" value="Chromosome 3"/>
</dbReference>
<dbReference type="Proteomes" id="UP000694570">
    <property type="component" value="Unplaced"/>
</dbReference>
<dbReference type="Proteomes" id="UP000694571">
    <property type="component" value="Unplaced"/>
</dbReference>
<dbReference type="Proteomes" id="UP000694720">
    <property type="component" value="Unplaced"/>
</dbReference>
<dbReference type="Proteomes" id="UP000694722">
    <property type="component" value="Unplaced"/>
</dbReference>
<dbReference type="Proteomes" id="UP000694723">
    <property type="component" value="Unplaced"/>
</dbReference>
<dbReference type="Proteomes" id="UP000694724">
    <property type="component" value="Unplaced"/>
</dbReference>
<dbReference type="Proteomes" id="UP000694725">
    <property type="component" value="Unplaced"/>
</dbReference>
<dbReference type="Proteomes" id="UP000694726">
    <property type="component" value="Unplaced"/>
</dbReference>
<dbReference type="Proteomes" id="UP000694727">
    <property type="component" value="Unplaced"/>
</dbReference>
<dbReference type="Proteomes" id="UP000694728">
    <property type="component" value="Unplaced"/>
</dbReference>
<dbReference type="GO" id="GO:0016020">
    <property type="term" value="C:membrane"/>
    <property type="evidence" value="ECO:0007669"/>
    <property type="project" value="UniProtKB-SubCell"/>
</dbReference>
<dbReference type="GO" id="GO:0005509">
    <property type="term" value="F:calcium ion binding"/>
    <property type="evidence" value="ECO:0000318"/>
    <property type="project" value="GO_Central"/>
</dbReference>
<dbReference type="GO" id="GO:0009966">
    <property type="term" value="P:regulation of signal transduction"/>
    <property type="evidence" value="ECO:0000318"/>
    <property type="project" value="GO_Central"/>
</dbReference>
<dbReference type="CDD" id="cd00051">
    <property type="entry name" value="EFh"/>
    <property type="match status" value="2"/>
</dbReference>
<dbReference type="FunFam" id="1.10.238.10:FF:000078">
    <property type="entry name" value="Hippocalcin-like 1"/>
    <property type="match status" value="1"/>
</dbReference>
<dbReference type="FunFam" id="1.10.238.10:FF:000072">
    <property type="entry name" value="Hippocalcin-like protein 1"/>
    <property type="match status" value="1"/>
</dbReference>
<dbReference type="Gene3D" id="1.10.238.10">
    <property type="entry name" value="EF-hand"/>
    <property type="match status" value="2"/>
</dbReference>
<dbReference type="InterPro" id="IPR011992">
    <property type="entry name" value="EF-hand-dom_pair"/>
</dbReference>
<dbReference type="InterPro" id="IPR018247">
    <property type="entry name" value="EF_Hand_1_Ca_BS"/>
</dbReference>
<dbReference type="InterPro" id="IPR002048">
    <property type="entry name" value="EF_hand_dom"/>
</dbReference>
<dbReference type="InterPro" id="IPR028846">
    <property type="entry name" value="Recoverin"/>
</dbReference>
<dbReference type="PANTHER" id="PTHR23055">
    <property type="entry name" value="CALCIUM BINDING PROTEINS"/>
    <property type="match status" value="1"/>
</dbReference>
<dbReference type="PANTHER" id="PTHR23055:SF79">
    <property type="entry name" value="HIPPOCALCIN-LIKE PROTEIN 1"/>
    <property type="match status" value="1"/>
</dbReference>
<dbReference type="Pfam" id="PF13499">
    <property type="entry name" value="EF-hand_7"/>
    <property type="match status" value="2"/>
</dbReference>
<dbReference type="PRINTS" id="PR00450">
    <property type="entry name" value="RECOVERIN"/>
</dbReference>
<dbReference type="SMART" id="SM00054">
    <property type="entry name" value="EFh"/>
    <property type="match status" value="3"/>
</dbReference>
<dbReference type="SUPFAM" id="SSF47473">
    <property type="entry name" value="EF-hand"/>
    <property type="match status" value="1"/>
</dbReference>
<dbReference type="PROSITE" id="PS00018">
    <property type="entry name" value="EF_HAND_1"/>
    <property type="match status" value="3"/>
</dbReference>
<dbReference type="PROSITE" id="PS50222">
    <property type="entry name" value="EF_HAND_2"/>
    <property type="match status" value="4"/>
</dbReference>
<sequence length="193" mass="22285">MGKQNSKLRPEVLQDLRENTEFTDHELQEWYKGFLKDCPTGHLTVDEFKKIYANFFPYGDASKFAEHVFRTFDTNGDGTIDFREFIIALSVTSRGKLEQKLKWAFSMYDLDGNGYISRSEMLEIVQAIYKMVSSVMKMPEDESTPEKRTDKIFRQMDTNNDGKLSLEEFIKGAKSDPSIVRLLQCDPSSASQF</sequence>
<proteinExistence type="evidence at transcript level"/>
<comment type="function">
    <text evidence="1">May be involved in the calcium-dependent regulation of rhodopsin phosphorylation.</text>
</comment>
<comment type="subcellular location">
    <subcellularLocation>
        <location evidence="2">Membrane</location>
        <topology evidence="2">Lipid-anchor</topology>
    </subcellularLocation>
</comment>
<comment type="miscellaneous">
    <text evidence="1">Probably binds two or three calcium ions.</text>
</comment>
<comment type="similarity">
    <text evidence="4">Belongs to the recoverin family.</text>
</comment>
<keyword id="KW-0106">Calcium</keyword>
<keyword id="KW-0449">Lipoprotein</keyword>
<keyword id="KW-0472">Membrane</keyword>
<keyword id="KW-0479">Metal-binding</keyword>
<keyword id="KW-0519">Myristate</keyword>
<keyword id="KW-1185">Reference proteome</keyword>
<keyword id="KW-0677">Repeat</keyword>
<feature type="initiator methionine" description="Removed" evidence="2">
    <location>
        <position position="1"/>
    </location>
</feature>
<feature type="chain" id="PRO_0000269885" description="Hippocalcin-like protein 1">
    <location>
        <begin position="2"/>
        <end position="193"/>
    </location>
</feature>
<feature type="domain" description="EF-hand 1" evidence="3">
    <location>
        <begin position="41"/>
        <end position="58"/>
    </location>
</feature>
<feature type="domain" description="EF-hand 2" evidence="3">
    <location>
        <begin position="60"/>
        <end position="95"/>
    </location>
</feature>
<feature type="domain" description="EF-hand 3" evidence="3">
    <location>
        <begin position="96"/>
        <end position="131"/>
    </location>
</feature>
<feature type="domain" description="EF-hand 4" evidence="3">
    <location>
        <begin position="144"/>
        <end position="179"/>
    </location>
</feature>
<feature type="binding site" evidence="3">
    <location>
        <position position="73"/>
    </location>
    <ligand>
        <name>Ca(2+)</name>
        <dbReference type="ChEBI" id="CHEBI:29108"/>
        <label>1</label>
    </ligand>
</feature>
<feature type="binding site" evidence="3">
    <location>
        <position position="75"/>
    </location>
    <ligand>
        <name>Ca(2+)</name>
        <dbReference type="ChEBI" id="CHEBI:29108"/>
        <label>1</label>
    </ligand>
</feature>
<feature type="binding site" evidence="3">
    <location>
        <position position="77"/>
    </location>
    <ligand>
        <name>Ca(2+)</name>
        <dbReference type="ChEBI" id="CHEBI:29108"/>
        <label>1</label>
    </ligand>
</feature>
<feature type="binding site" evidence="3">
    <location>
        <position position="79"/>
    </location>
    <ligand>
        <name>Ca(2+)</name>
        <dbReference type="ChEBI" id="CHEBI:29108"/>
        <label>1</label>
    </ligand>
</feature>
<feature type="binding site" evidence="3">
    <location>
        <position position="84"/>
    </location>
    <ligand>
        <name>Ca(2+)</name>
        <dbReference type="ChEBI" id="CHEBI:29108"/>
        <label>1</label>
    </ligand>
</feature>
<feature type="binding site" evidence="3">
    <location>
        <position position="109"/>
    </location>
    <ligand>
        <name>Ca(2+)</name>
        <dbReference type="ChEBI" id="CHEBI:29108"/>
        <label>2</label>
    </ligand>
</feature>
<feature type="binding site" evidence="3">
    <location>
        <position position="111"/>
    </location>
    <ligand>
        <name>Ca(2+)</name>
        <dbReference type="ChEBI" id="CHEBI:29108"/>
        <label>2</label>
    </ligand>
</feature>
<feature type="binding site" evidence="3">
    <location>
        <position position="113"/>
    </location>
    <ligand>
        <name>Ca(2+)</name>
        <dbReference type="ChEBI" id="CHEBI:29108"/>
        <label>2</label>
    </ligand>
</feature>
<feature type="binding site" evidence="3">
    <location>
        <position position="115"/>
    </location>
    <ligand>
        <name>Ca(2+)</name>
        <dbReference type="ChEBI" id="CHEBI:29108"/>
        <label>2</label>
    </ligand>
</feature>
<feature type="binding site" evidence="3">
    <location>
        <position position="120"/>
    </location>
    <ligand>
        <name>Ca(2+)</name>
        <dbReference type="ChEBI" id="CHEBI:29108"/>
        <label>2</label>
    </ligand>
</feature>
<feature type="binding site" evidence="3">
    <location>
        <position position="157"/>
    </location>
    <ligand>
        <name>Ca(2+)</name>
        <dbReference type="ChEBI" id="CHEBI:29108"/>
        <label>3</label>
    </ligand>
</feature>
<feature type="binding site" evidence="3">
    <location>
        <position position="159"/>
    </location>
    <ligand>
        <name>Ca(2+)</name>
        <dbReference type="ChEBI" id="CHEBI:29108"/>
        <label>3</label>
    </ligand>
</feature>
<feature type="binding site" evidence="3">
    <location>
        <position position="161"/>
    </location>
    <ligand>
        <name>Ca(2+)</name>
        <dbReference type="ChEBI" id="CHEBI:29108"/>
        <label>3</label>
    </ligand>
</feature>
<feature type="binding site" evidence="3">
    <location>
        <position position="163"/>
    </location>
    <ligand>
        <name>Ca(2+)</name>
        <dbReference type="ChEBI" id="CHEBI:29108"/>
        <label>3</label>
    </ligand>
</feature>
<feature type="binding site" evidence="3">
    <location>
        <position position="168"/>
    </location>
    <ligand>
        <name>Ca(2+)</name>
        <dbReference type="ChEBI" id="CHEBI:29108"/>
        <label>3</label>
    </ligand>
</feature>
<feature type="lipid moiety-binding region" description="N-myristoyl glycine" evidence="2">
    <location>
        <position position="2"/>
    </location>
</feature>
<reference key="1">
    <citation type="submission" date="2006-08" db="EMBL/GenBank/DDBJ databases">
        <authorList>
            <person name="Liu G.Y."/>
        </authorList>
    </citation>
    <scope>NUCLEOTIDE SEQUENCE [LARGE SCALE MRNA]</scope>
</reference>
<gene>
    <name type="primary">HPCAL1</name>
</gene>
<accession>Q06AT0</accession>